<comment type="subcellular location">
    <subcellularLocation>
        <location evidence="1">Cell inner membrane</location>
        <topology evidence="1">Multi-pass membrane protein</topology>
    </subcellularLocation>
</comment>
<comment type="similarity">
    <text evidence="1">Belongs to the UPF0060 family.</text>
</comment>
<comment type="sequence caution" evidence="2">
    <conflict type="frameshift">
        <sequence resource="EMBL-CDS" id="AAW75045"/>
    </conflict>
</comment>
<name>Y1791_XANOR</name>
<proteinExistence type="inferred from homology"/>
<protein>
    <recommendedName>
        <fullName evidence="1">UPF0060 membrane protein XOO1791</fullName>
    </recommendedName>
</protein>
<reference key="1">
    <citation type="journal article" date="2005" name="Nucleic Acids Res.">
        <title>The genome sequence of Xanthomonas oryzae pathovar oryzae KACC10331, the bacterial blight pathogen of rice.</title>
        <authorList>
            <person name="Lee B.-M."/>
            <person name="Park Y.-J."/>
            <person name="Park D.-S."/>
            <person name="Kang H.-W."/>
            <person name="Kim J.-G."/>
            <person name="Song E.-S."/>
            <person name="Park I.-C."/>
            <person name="Yoon U.-H."/>
            <person name="Hahn J.-H."/>
            <person name="Koo B.-S."/>
            <person name="Lee G.-B."/>
            <person name="Kim H."/>
            <person name="Park H.-S."/>
            <person name="Yoon K.-O."/>
            <person name="Kim J.-H."/>
            <person name="Jung C.-H."/>
            <person name="Koh N.-H."/>
            <person name="Seo J.-S."/>
            <person name="Go S.-J."/>
        </authorList>
    </citation>
    <scope>NUCLEOTIDE SEQUENCE [LARGE SCALE GENOMIC DNA]</scope>
    <source>
        <strain>KACC10331 / KXO85</strain>
    </source>
</reference>
<sequence>MNLAPTTLLLFAATALAELVGCYLPYLWLRNGGSVWLLLPTALRLASFVWLLSLHPDASGRVYAAYGGVYIASALGLWLWWVDGVTPTRWDLLGAVCCLFGMAIIMFAPRSA</sequence>
<feature type="chain" id="PRO_0000282276" description="UPF0060 membrane protein XOO1791">
    <location>
        <begin position="1"/>
        <end position="112"/>
    </location>
</feature>
<feature type="transmembrane region" description="Helical" evidence="1">
    <location>
        <begin position="8"/>
        <end position="28"/>
    </location>
</feature>
<feature type="transmembrane region" description="Helical" evidence="1">
    <location>
        <begin position="32"/>
        <end position="52"/>
    </location>
</feature>
<feature type="transmembrane region" description="Helical" evidence="1">
    <location>
        <begin position="62"/>
        <end position="82"/>
    </location>
</feature>
<feature type="transmembrane region" description="Helical" evidence="1">
    <location>
        <begin position="92"/>
        <end position="112"/>
    </location>
</feature>
<gene>
    <name type="ordered locus">XOO1791</name>
</gene>
<organism>
    <name type="scientific">Xanthomonas oryzae pv. oryzae (strain KACC10331 / KXO85)</name>
    <dbReference type="NCBI Taxonomy" id="291331"/>
    <lineage>
        <taxon>Bacteria</taxon>
        <taxon>Pseudomonadati</taxon>
        <taxon>Pseudomonadota</taxon>
        <taxon>Gammaproteobacteria</taxon>
        <taxon>Lysobacterales</taxon>
        <taxon>Lysobacteraceae</taxon>
        <taxon>Xanthomonas</taxon>
    </lineage>
</organism>
<keyword id="KW-0997">Cell inner membrane</keyword>
<keyword id="KW-1003">Cell membrane</keyword>
<keyword id="KW-0472">Membrane</keyword>
<keyword id="KW-1185">Reference proteome</keyword>
<keyword id="KW-0812">Transmembrane</keyword>
<keyword id="KW-1133">Transmembrane helix</keyword>
<accession>Q5H1X6</accession>
<evidence type="ECO:0000255" key="1">
    <source>
        <dbReference type="HAMAP-Rule" id="MF_00010"/>
    </source>
</evidence>
<evidence type="ECO:0000305" key="2"/>
<dbReference type="EMBL" id="AE013598">
    <property type="protein sequence ID" value="AAW75045.1"/>
    <property type="status" value="ALT_FRAME"/>
    <property type="molecule type" value="Genomic_DNA"/>
</dbReference>
<dbReference type="SMR" id="Q5H1X6"/>
<dbReference type="STRING" id="291331.XOO1791"/>
<dbReference type="KEGG" id="xoo:XOO1791"/>
<dbReference type="HOGENOM" id="CLU_117653_3_0_6"/>
<dbReference type="Proteomes" id="UP000006735">
    <property type="component" value="Chromosome"/>
</dbReference>
<dbReference type="GO" id="GO:0005886">
    <property type="term" value="C:plasma membrane"/>
    <property type="evidence" value="ECO:0007669"/>
    <property type="project" value="UniProtKB-SubCell"/>
</dbReference>
<dbReference type="HAMAP" id="MF_00010">
    <property type="entry name" value="UPF0060"/>
    <property type="match status" value="1"/>
</dbReference>
<dbReference type="InterPro" id="IPR003844">
    <property type="entry name" value="UPF0060"/>
</dbReference>
<dbReference type="NCBIfam" id="NF002586">
    <property type="entry name" value="PRK02237.1"/>
    <property type="match status" value="1"/>
</dbReference>
<dbReference type="PANTHER" id="PTHR36116">
    <property type="entry name" value="UPF0060 MEMBRANE PROTEIN YNFA"/>
    <property type="match status" value="1"/>
</dbReference>
<dbReference type="PANTHER" id="PTHR36116:SF1">
    <property type="entry name" value="UPF0060 MEMBRANE PROTEIN YNFA"/>
    <property type="match status" value="1"/>
</dbReference>
<dbReference type="Pfam" id="PF02694">
    <property type="entry name" value="UPF0060"/>
    <property type="match status" value="1"/>
</dbReference>